<reference key="1">
    <citation type="submission" date="2003-04" db="EMBL/GenBank/DDBJ databases">
        <title>Cloning and sequence analysis of grass pollen panallergens in Humulus scandens (Lour.) Merr and short ragweed (Ambrosia artemisiifolia L.).</title>
        <authorList>
            <person name="Tao A.L."/>
            <person name="He S.H."/>
            <person name="Zhang L."/>
            <person name="Chen Z."/>
            <person name="Li D."/>
        </authorList>
    </citation>
    <scope>NUCLEOTIDE SEQUENCE [MRNA]</scope>
    <source>
        <tissue>Pollen</tissue>
    </source>
</reference>
<gene>
    <name type="ORF">D03</name>
</gene>
<accession>Q64LH0</accession>
<comment type="function">
    <text evidence="1">Binds to actin and affects the structure of the cytoskeleton. At high concentrations, profilin prevents the polymerization of actin, whereas it enhances it at low concentrations. By binding to PIP2, it inhibits the formation of IP3 and DG (By similarity).</text>
</comment>
<comment type="subunit">
    <text>Occurs in many kinds of cells as a complex with monomeric actin in a 1:1 ratio.</text>
</comment>
<comment type="subcellular location">
    <subcellularLocation>
        <location evidence="1">Cytoplasm</location>
        <location evidence="1">Cytoskeleton</location>
    </subcellularLocation>
</comment>
<comment type="allergen">
    <text>Causes an allergic reaction in human.</text>
</comment>
<comment type="similarity">
    <text evidence="2">Belongs to the profilin family.</text>
</comment>
<proteinExistence type="evidence at protein level"/>
<protein>
    <recommendedName>
        <fullName>Profilin-3</fullName>
    </recommendedName>
    <alternativeName>
        <fullName>Pollen allergen D03</fullName>
    </alternativeName>
    <allergenName>Amb a 8</allergenName>
</protein>
<dbReference type="EMBL" id="AY268427">
    <property type="protein sequence ID" value="AAP15203.1"/>
    <property type="molecule type" value="mRNA"/>
</dbReference>
<dbReference type="SMR" id="Q64LH0"/>
<dbReference type="Allergome" id="751">
    <property type="allergen name" value="Amb a 8"/>
</dbReference>
<dbReference type="GO" id="GO:0005938">
    <property type="term" value="C:cell cortex"/>
    <property type="evidence" value="ECO:0007669"/>
    <property type="project" value="TreeGrafter"/>
</dbReference>
<dbReference type="GO" id="GO:0005856">
    <property type="term" value="C:cytoskeleton"/>
    <property type="evidence" value="ECO:0007669"/>
    <property type="project" value="UniProtKB-SubCell"/>
</dbReference>
<dbReference type="GO" id="GO:0003785">
    <property type="term" value="F:actin monomer binding"/>
    <property type="evidence" value="ECO:0007669"/>
    <property type="project" value="TreeGrafter"/>
</dbReference>
<dbReference type="CDD" id="cd00148">
    <property type="entry name" value="PROF"/>
    <property type="match status" value="1"/>
</dbReference>
<dbReference type="FunFam" id="3.30.450.30:FF:000001">
    <property type="entry name" value="Profilin"/>
    <property type="match status" value="1"/>
</dbReference>
<dbReference type="Gene3D" id="3.30.450.30">
    <property type="entry name" value="Dynein light chain 2a, cytoplasmic"/>
    <property type="match status" value="1"/>
</dbReference>
<dbReference type="InterPro" id="IPR048278">
    <property type="entry name" value="PFN"/>
</dbReference>
<dbReference type="InterPro" id="IPR005455">
    <property type="entry name" value="PFN_euk"/>
</dbReference>
<dbReference type="InterPro" id="IPR036140">
    <property type="entry name" value="PFN_sf"/>
</dbReference>
<dbReference type="InterPro" id="IPR027310">
    <property type="entry name" value="Profilin_CS"/>
</dbReference>
<dbReference type="PANTHER" id="PTHR11604">
    <property type="entry name" value="PROFILIN"/>
    <property type="match status" value="1"/>
</dbReference>
<dbReference type="PANTHER" id="PTHR11604:SF54">
    <property type="entry name" value="PROFILIN"/>
    <property type="match status" value="1"/>
</dbReference>
<dbReference type="Pfam" id="PF00235">
    <property type="entry name" value="Profilin"/>
    <property type="match status" value="1"/>
</dbReference>
<dbReference type="PRINTS" id="PR00392">
    <property type="entry name" value="PROFILIN"/>
</dbReference>
<dbReference type="PRINTS" id="PR01640">
    <property type="entry name" value="PROFILINPLNT"/>
</dbReference>
<dbReference type="SMART" id="SM00392">
    <property type="entry name" value="PROF"/>
    <property type="match status" value="1"/>
</dbReference>
<dbReference type="SUPFAM" id="SSF55770">
    <property type="entry name" value="Profilin (actin-binding protein)"/>
    <property type="match status" value="1"/>
</dbReference>
<dbReference type="PROSITE" id="PS00414">
    <property type="entry name" value="PROFILIN"/>
    <property type="match status" value="1"/>
</dbReference>
<feature type="initiator methionine" description="Removed" evidence="1">
    <location>
        <position position="1"/>
    </location>
</feature>
<feature type="chain" id="PRO_0000199611" description="Profilin-3">
    <location>
        <begin position="2"/>
        <end position="133"/>
    </location>
</feature>
<keyword id="KW-0009">Actin-binding</keyword>
<keyword id="KW-0020">Allergen</keyword>
<keyword id="KW-0963">Cytoplasm</keyword>
<keyword id="KW-0206">Cytoskeleton</keyword>
<evidence type="ECO:0000250" key="1"/>
<evidence type="ECO:0000305" key="2"/>
<name>PROF3_AMBAR</name>
<sequence length="133" mass="14277">MSWQAYVDEHLMCDIEGTGHHLTSAAILGHDGTVWAQSSNFPQFKPEEMKGIITEFDQAGTLAPTGMFIAGAKYMVLQGEQGAVIRGKKGAGGICIKKTGQALVMGIYDEPVAPGQCNMVVERLGDYLIDQGM</sequence>
<organism>
    <name type="scientific">Ambrosia artemisiifolia</name>
    <name type="common">Common ragweed</name>
    <dbReference type="NCBI Taxonomy" id="4212"/>
    <lineage>
        <taxon>Eukaryota</taxon>
        <taxon>Viridiplantae</taxon>
        <taxon>Streptophyta</taxon>
        <taxon>Embryophyta</taxon>
        <taxon>Tracheophyta</taxon>
        <taxon>Spermatophyta</taxon>
        <taxon>Magnoliopsida</taxon>
        <taxon>eudicotyledons</taxon>
        <taxon>Gunneridae</taxon>
        <taxon>Pentapetalae</taxon>
        <taxon>asterids</taxon>
        <taxon>campanulids</taxon>
        <taxon>Asterales</taxon>
        <taxon>Asteraceae</taxon>
        <taxon>Asteroideae</taxon>
        <taxon>Heliantheae alliance</taxon>
        <taxon>Heliantheae</taxon>
        <taxon>Ambrosia</taxon>
    </lineage>
</organism>